<keyword id="KW-0997">Cell inner membrane</keyword>
<keyword id="KW-1003">Cell membrane</keyword>
<keyword id="KW-0143">Chaperone</keyword>
<keyword id="KW-0472">Membrane</keyword>
<keyword id="KW-0653">Protein transport</keyword>
<keyword id="KW-1185">Reference proteome</keyword>
<keyword id="KW-0812">Transmembrane</keyword>
<keyword id="KW-1133">Transmembrane helix</keyword>
<keyword id="KW-0813">Transport</keyword>
<sequence length="548" mass="61634">MDSQRNLLVIALLFVSFMIWQAWEQDKNPQPQTQQTTQTTTTAAGSAADQGVPASGQGKMITVKTDVLDLTINTRGGDVEQALLPAYPKELGSNEPFQLLETTPQFIYQAQSGLTGRDGPDNPANGPRPLYNVEKEAFVLADGQNELQVPMTYTDAAGNTFTKTFVFKRGDYAVNVNYSVQNAGEKPLEVSTFGQLKQSVNLPPHRDTGSSNFALHTFRGAAYSTPDEKYEKYKFDTIADNENLNVSSKGGWVAMLQQYFATAWIPRNDGTNNFYTANLGNGIVAIGYKAQPVLVQPGQTGAMTSTLWVGPEIQDKMAAVAPHLDLTVDYGWLWFISQPLFKLLKWIHSFVGNWGFSIIIITFIVRGIMYPLTKAQYTSMAKMRMLQPKIQAMRERLGDDKQRQSQEMMALYKAEKVNPLGGCFPLIIQMPIFLALYYMLMGSIELRHAPFALWIHDLSAQDPYYILPILMGVTMFFIQKMSPTTVTDPMQQKIMTFMPVIFTVFFLWFPSGLVLYYIVSNLVTIIQQQLIYRGLEKRGLHSREKKKS</sequence>
<proteinExistence type="inferred from homology"/>
<dbReference type="EMBL" id="AE006468">
    <property type="protein sequence ID" value="AAL22701.1"/>
    <property type="molecule type" value="Genomic_DNA"/>
</dbReference>
<dbReference type="RefSeq" id="NP_462742.1">
    <property type="nucleotide sequence ID" value="NC_003197.2"/>
</dbReference>
<dbReference type="RefSeq" id="WP_000378281.1">
    <property type="nucleotide sequence ID" value="NC_003197.2"/>
</dbReference>
<dbReference type="SMR" id="Q8ZKY4"/>
<dbReference type="STRING" id="99287.STM3842"/>
<dbReference type="PaxDb" id="99287-STM3842"/>
<dbReference type="GeneID" id="1255369"/>
<dbReference type="KEGG" id="stm:STM3842"/>
<dbReference type="PATRIC" id="fig|99287.12.peg.4069"/>
<dbReference type="HOGENOM" id="CLU_016535_3_0_6"/>
<dbReference type="OMA" id="YAEFGWV"/>
<dbReference type="PhylomeDB" id="Q8ZKY4"/>
<dbReference type="BioCyc" id="SENT99287:STM3842-MONOMER"/>
<dbReference type="Proteomes" id="UP000001014">
    <property type="component" value="Chromosome"/>
</dbReference>
<dbReference type="GO" id="GO:0005886">
    <property type="term" value="C:plasma membrane"/>
    <property type="evidence" value="ECO:0000318"/>
    <property type="project" value="GO_Central"/>
</dbReference>
<dbReference type="GO" id="GO:0032977">
    <property type="term" value="F:membrane insertase activity"/>
    <property type="evidence" value="ECO:0000318"/>
    <property type="project" value="GO_Central"/>
</dbReference>
<dbReference type="GO" id="GO:0051205">
    <property type="term" value="P:protein insertion into membrane"/>
    <property type="evidence" value="ECO:0000318"/>
    <property type="project" value="GO_Central"/>
</dbReference>
<dbReference type="GO" id="GO:0015031">
    <property type="term" value="P:protein transport"/>
    <property type="evidence" value="ECO:0007669"/>
    <property type="project" value="UniProtKB-KW"/>
</dbReference>
<dbReference type="CDD" id="cd20070">
    <property type="entry name" value="5TM_YidC_Alb3"/>
    <property type="match status" value="1"/>
</dbReference>
<dbReference type="CDD" id="cd19961">
    <property type="entry name" value="EcYidC-like_peri"/>
    <property type="match status" value="1"/>
</dbReference>
<dbReference type="FunFam" id="2.70.98.90:FF:000001">
    <property type="entry name" value="Membrane protein insertase YidC"/>
    <property type="match status" value="1"/>
</dbReference>
<dbReference type="Gene3D" id="2.70.98.90">
    <property type="match status" value="1"/>
</dbReference>
<dbReference type="HAMAP" id="MF_01810">
    <property type="entry name" value="YidC_type1"/>
    <property type="match status" value="1"/>
</dbReference>
<dbReference type="InterPro" id="IPR019998">
    <property type="entry name" value="Membr_insert_YidC"/>
</dbReference>
<dbReference type="InterPro" id="IPR028053">
    <property type="entry name" value="Membr_insert_YidC_N"/>
</dbReference>
<dbReference type="InterPro" id="IPR001708">
    <property type="entry name" value="YidC/ALB3/OXA1/COX18"/>
</dbReference>
<dbReference type="InterPro" id="IPR028055">
    <property type="entry name" value="YidC/Oxa/ALB_C"/>
</dbReference>
<dbReference type="InterPro" id="IPR047196">
    <property type="entry name" value="YidC_ALB_C"/>
</dbReference>
<dbReference type="InterPro" id="IPR038221">
    <property type="entry name" value="YidC_periplasmic_sf"/>
</dbReference>
<dbReference type="NCBIfam" id="NF002351">
    <property type="entry name" value="PRK01318.1-1"/>
    <property type="match status" value="1"/>
</dbReference>
<dbReference type="NCBIfam" id="NF002352">
    <property type="entry name" value="PRK01318.1-3"/>
    <property type="match status" value="1"/>
</dbReference>
<dbReference type="NCBIfam" id="NF002353">
    <property type="entry name" value="PRK01318.1-4"/>
    <property type="match status" value="1"/>
</dbReference>
<dbReference type="NCBIfam" id="TIGR03593">
    <property type="entry name" value="yidC_nterm"/>
    <property type="match status" value="1"/>
</dbReference>
<dbReference type="NCBIfam" id="TIGR03592">
    <property type="entry name" value="yidC_oxa1_cterm"/>
    <property type="match status" value="1"/>
</dbReference>
<dbReference type="PANTHER" id="PTHR12428:SF65">
    <property type="entry name" value="CYTOCHROME C OXIDASE ASSEMBLY PROTEIN COX18, MITOCHONDRIAL"/>
    <property type="match status" value="1"/>
</dbReference>
<dbReference type="PANTHER" id="PTHR12428">
    <property type="entry name" value="OXA1"/>
    <property type="match status" value="1"/>
</dbReference>
<dbReference type="Pfam" id="PF02096">
    <property type="entry name" value="60KD_IMP"/>
    <property type="match status" value="1"/>
</dbReference>
<dbReference type="Pfam" id="PF14849">
    <property type="entry name" value="YidC_periplas"/>
    <property type="match status" value="1"/>
</dbReference>
<dbReference type="PRINTS" id="PR00701">
    <property type="entry name" value="60KDINNERMP"/>
</dbReference>
<dbReference type="PRINTS" id="PR01900">
    <property type="entry name" value="YIDCPROTEIN"/>
</dbReference>
<evidence type="ECO:0000255" key="1">
    <source>
        <dbReference type="HAMAP-Rule" id="MF_01810"/>
    </source>
</evidence>
<evidence type="ECO:0000256" key="2">
    <source>
        <dbReference type="SAM" id="MobiDB-lite"/>
    </source>
</evidence>
<organism>
    <name type="scientific">Salmonella typhimurium (strain LT2 / SGSC1412 / ATCC 700720)</name>
    <dbReference type="NCBI Taxonomy" id="99287"/>
    <lineage>
        <taxon>Bacteria</taxon>
        <taxon>Pseudomonadati</taxon>
        <taxon>Pseudomonadota</taxon>
        <taxon>Gammaproteobacteria</taxon>
        <taxon>Enterobacterales</taxon>
        <taxon>Enterobacteriaceae</taxon>
        <taxon>Salmonella</taxon>
    </lineage>
</organism>
<name>YIDC_SALTY</name>
<protein>
    <recommendedName>
        <fullName evidence="1">Membrane protein insertase YidC</fullName>
    </recommendedName>
    <alternativeName>
        <fullName evidence="1">Foldase YidC</fullName>
    </alternativeName>
    <alternativeName>
        <fullName evidence="1">Membrane integrase YidC</fullName>
    </alternativeName>
    <alternativeName>
        <fullName evidence="1">Membrane protein YidC</fullName>
    </alternativeName>
</protein>
<accession>Q8ZKY4</accession>
<gene>
    <name evidence="1" type="primary">yidC</name>
    <name type="ordered locus">STM3842</name>
</gene>
<reference key="1">
    <citation type="journal article" date="2001" name="Nature">
        <title>Complete genome sequence of Salmonella enterica serovar Typhimurium LT2.</title>
        <authorList>
            <person name="McClelland M."/>
            <person name="Sanderson K.E."/>
            <person name="Spieth J."/>
            <person name="Clifton S.W."/>
            <person name="Latreille P."/>
            <person name="Courtney L."/>
            <person name="Porwollik S."/>
            <person name="Ali J."/>
            <person name="Dante M."/>
            <person name="Du F."/>
            <person name="Hou S."/>
            <person name="Layman D."/>
            <person name="Leonard S."/>
            <person name="Nguyen C."/>
            <person name="Scott K."/>
            <person name="Holmes A."/>
            <person name="Grewal N."/>
            <person name="Mulvaney E."/>
            <person name="Ryan E."/>
            <person name="Sun H."/>
            <person name="Florea L."/>
            <person name="Miller W."/>
            <person name="Stoneking T."/>
            <person name="Nhan M."/>
            <person name="Waterston R."/>
            <person name="Wilson R.K."/>
        </authorList>
    </citation>
    <scope>NUCLEOTIDE SEQUENCE [LARGE SCALE GENOMIC DNA]</scope>
    <source>
        <strain>LT2 / SGSC1412 / ATCC 700720</strain>
    </source>
</reference>
<comment type="function">
    <text evidence="1">Required for the insertion and/or proper folding and/or complex formation of integral membrane proteins into the membrane. Involved in integration of membrane proteins that insert both dependently and independently of the Sec translocase complex, as well as at least some lipoproteins. Aids folding of multispanning membrane proteins.</text>
</comment>
<comment type="subunit">
    <text evidence="1">Interacts with the Sec translocase complex via SecD. Specifically interacts with transmembrane segments of nascent integral membrane proteins during membrane integration.</text>
</comment>
<comment type="subcellular location">
    <subcellularLocation>
        <location evidence="1">Cell inner membrane</location>
        <topology evidence="1">Multi-pass membrane protein</topology>
    </subcellularLocation>
</comment>
<comment type="similarity">
    <text evidence="1">Belongs to the OXA1/ALB3/YidC family. Type 1 subfamily.</text>
</comment>
<feature type="chain" id="PRO_0000124752" description="Membrane protein insertase YidC">
    <location>
        <begin position="1"/>
        <end position="548"/>
    </location>
</feature>
<feature type="transmembrane region" description="Helical" evidence="1">
    <location>
        <begin position="6"/>
        <end position="26"/>
    </location>
</feature>
<feature type="transmembrane region" description="Helical" evidence="1">
    <location>
        <begin position="350"/>
        <end position="370"/>
    </location>
</feature>
<feature type="transmembrane region" description="Helical" evidence="1">
    <location>
        <begin position="424"/>
        <end position="444"/>
    </location>
</feature>
<feature type="transmembrane region" description="Helical" evidence="1">
    <location>
        <begin position="458"/>
        <end position="478"/>
    </location>
</feature>
<feature type="transmembrane region" description="Helical" evidence="1">
    <location>
        <begin position="499"/>
        <end position="519"/>
    </location>
</feature>
<feature type="region of interest" description="Disordered" evidence="2">
    <location>
        <begin position="28"/>
        <end position="56"/>
    </location>
</feature>
<feature type="compositionally biased region" description="Low complexity" evidence="2">
    <location>
        <begin position="29"/>
        <end position="42"/>
    </location>
</feature>